<comment type="function">
    <text evidence="1">Binds 16S rRNA, required for the assembly of 30S particles.</text>
</comment>
<comment type="cofactor">
    <cofactor evidence="1">
        <name>Zn(2+)</name>
        <dbReference type="ChEBI" id="CHEBI:29105"/>
    </cofactor>
    <text evidence="1">Binds 1 zinc ion per subunit.</text>
</comment>
<comment type="subunit">
    <text evidence="1">Part of the 30S ribosomal subunit.</text>
</comment>
<comment type="similarity">
    <text evidence="1">Belongs to the universal ribosomal protein uS14 family. Zinc-binding uS14 subfamily.</text>
</comment>
<feature type="chain" id="PRO_0000131000" description="Small ribosomal subunit protein uS14">
    <location>
        <begin position="1"/>
        <end position="54"/>
    </location>
</feature>
<feature type="binding site" evidence="1">
    <location>
        <position position="19"/>
    </location>
    <ligand>
        <name>Zn(2+)</name>
        <dbReference type="ChEBI" id="CHEBI:29105"/>
    </ligand>
</feature>
<feature type="binding site" evidence="1">
    <location>
        <position position="22"/>
    </location>
    <ligand>
        <name>Zn(2+)</name>
        <dbReference type="ChEBI" id="CHEBI:29105"/>
    </ligand>
</feature>
<feature type="binding site" evidence="1">
    <location>
        <position position="37"/>
    </location>
    <ligand>
        <name>Zn(2+)</name>
        <dbReference type="ChEBI" id="CHEBI:29105"/>
    </ligand>
</feature>
<feature type="binding site" evidence="1">
    <location>
        <position position="40"/>
    </location>
    <ligand>
        <name>Zn(2+)</name>
        <dbReference type="ChEBI" id="CHEBI:29105"/>
    </ligand>
</feature>
<gene>
    <name evidence="1" type="primary">rps14</name>
    <name type="ordered locus">STK_04195</name>
    <name type="ORF">STS059</name>
</gene>
<keyword id="KW-0479">Metal-binding</keyword>
<keyword id="KW-1185">Reference proteome</keyword>
<keyword id="KW-0687">Ribonucleoprotein</keyword>
<keyword id="KW-0689">Ribosomal protein</keyword>
<keyword id="KW-0694">RNA-binding</keyword>
<keyword id="KW-0699">rRNA-binding</keyword>
<keyword id="KW-0862">Zinc</keyword>
<sequence>MGKYKPPAERKYGRGVQVCRRCGSRDSVIQKYGLYLCRQCFREVAYEMGFKKTR</sequence>
<reference key="1">
    <citation type="journal article" date="2001" name="DNA Res.">
        <title>Complete genome sequence of an aerobic thermoacidophilic Crenarchaeon, Sulfolobus tokodaii strain7.</title>
        <authorList>
            <person name="Kawarabayasi Y."/>
            <person name="Hino Y."/>
            <person name="Horikawa H."/>
            <person name="Jin-no K."/>
            <person name="Takahashi M."/>
            <person name="Sekine M."/>
            <person name="Baba S."/>
            <person name="Ankai A."/>
            <person name="Kosugi H."/>
            <person name="Hosoyama A."/>
            <person name="Fukui S."/>
            <person name="Nagai Y."/>
            <person name="Nishijima K."/>
            <person name="Otsuka R."/>
            <person name="Nakazawa H."/>
            <person name="Takamiya M."/>
            <person name="Kato Y."/>
            <person name="Yoshizawa T."/>
            <person name="Tanaka T."/>
            <person name="Kudoh Y."/>
            <person name="Yamazaki J."/>
            <person name="Kushida N."/>
            <person name="Oguchi A."/>
            <person name="Aoki K."/>
            <person name="Masuda S."/>
            <person name="Yanagii M."/>
            <person name="Nishimura M."/>
            <person name="Yamagishi A."/>
            <person name="Oshima T."/>
            <person name="Kikuchi H."/>
        </authorList>
    </citation>
    <scope>NUCLEOTIDE SEQUENCE [LARGE SCALE GENOMIC DNA]</scope>
    <source>
        <strain>DSM 16993 / JCM 10545 / NBRC 100140 / 7</strain>
    </source>
</reference>
<organism>
    <name type="scientific">Sulfurisphaera tokodaii (strain DSM 16993 / JCM 10545 / NBRC 100140 / 7)</name>
    <name type="common">Sulfolobus tokodaii</name>
    <dbReference type="NCBI Taxonomy" id="273063"/>
    <lineage>
        <taxon>Archaea</taxon>
        <taxon>Thermoproteota</taxon>
        <taxon>Thermoprotei</taxon>
        <taxon>Sulfolobales</taxon>
        <taxon>Sulfolobaceae</taxon>
        <taxon>Sulfurisphaera</taxon>
    </lineage>
</organism>
<name>RS14Z_SULTO</name>
<evidence type="ECO:0000255" key="1">
    <source>
        <dbReference type="HAMAP-Rule" id="MF_01364"/>
    </source>
</evidence>
<evidence type="ECO:0000305" key="2"/>
<protein>
    <recommendedName>
        <fullName evidence="1">Small ribosomal subunit protein uS14</fullName>
    </recommendedName>
    <alternativeName>
        <fullName evidence="2">30S ribosomal protein S14 type Z</fullName>
    </alternativeName>
</protein>
<dbReference type="EMBL" id="BA000023">
    <property type="protein sequence ID" value="BAK54271.1"/>
    <property type="molecule type" value="Genomic_DNA"/>
</dbReference>
<dbReference type="RefSeq" id="WP_010978389.1">
    <property type="nucleotide sequence ID" value="NC_003106.2"/>
</dbReference>
<dbReference type="SMR" id="Q975J4"/>
<dbReference type="STRING" id="273063.STK_04195"/>
<dbReference type="KEGG" id="sto:STK_04195"/>
<dbReference type="PATRIC" id="fig|273063.9.peg.486"/>
<dbReference type="eggNOG" id="arCOG00782">
    <property type="taxonomic scope" value="Archaea"/>
</dbReference>
<dbReference type="OrthoDB" id="5615at2157"/>
<dbReference type="Proteomes" id="UP000001015">
    <property type="component" value="Chromosome"/>
</dbReference>
<dbReference type="GO" id="GO:0022627">
    <property type="term" value="C:cytosolic small ribosomal subunit"/>
    <property type="evidence" value="ECO:0007669"/>
    <property type="project" value="TreeGrafter"/>
</dbReference>
<dbReference type="GO" id="GO:0019843">
    <property type="term" value="F:rRNA binding"/>
    <property type="evidence" value="ECO:0007669"/>
    <property type="project" value="UniProtKB-UniRule"/>
</dbReference>
<dbReference type="GO" id="GO:0003735">
    <property type="term" value="F:structural constituent of ribosome"/>
    <property type="evidence" value="ECO:0007669"/>
    <property type="project" value="InterPro"/>
</dbReference>
<dbReference type="GO" id="GO:0008270">
    <property type="term" value="F:zinc ion binding"/>
    <property type="evidence" value="ECO:0007669"/>
    <property type="project" value="UniProtKB-UniRule"/>
</dbReference>
<dbReference type="GO" id="GO:0002181">
    <property type="term" value="P:cytoplasmic translation"/>
    <property type="evidence" value="ECO:0007669"/>
    <property type="project" value="TreeGrafter"/>
</dbReference>
<dbReference type="FunFam" id="4.10.830.10:FF:000002">
    <property type="entry name" value="40S ribosomal protein S29"/>
    <property type="match status" value="1"/>
</dbReference>
<dbReference type="Gene3D" id="4.10.830.10">
    <property type="entry name" value="30s Ribosomal Protein S14, Chain N"/>
    <property type="match status" value="1"/>
</dbReference>
<dbReference type="HAMAP" id="MF_01364_A">
    <property type="entry name" value="Ribosomal_uS14_2_A"/>
    <property type="match status" value="1"/>
</dbReference>
<dbReference type="InterPro" id="IPR001209">
    <property type="entry name" value="Ribosomal_uS14"/>
</dbReference>
<dbReference type="InterPro" id="IPR023676">
    <property type="entry name" value="Ribosomal_uS14_arc"/>
</dbReference>
<dbReference type="InterPro" id="IPR018271">
    <property type="entry name" value="Ribosomal_uS14_CS"/>
</dbReference>
<dbReference type="InterPro" id="IPR039744">
    <property type="entry name" value="RIbosomal_uS14_euk_arc"/>
</dbReference>
<dbReference type="InterPro" id="IPR043140">
    <property type="entry name" value="Ribosomal_uS14_sf"/>
</dbReference>
<dbReference type="NCBIfam" id="NF004424">
    <property type="entry name" value="PRK05766.1"/>
    <property type="match status" value="1"/>
</dbReference>
<dbReference type="PANTHER" id="PTHR12010">
    <property type="entry name" value="40S RIBOSOMAL PROTEIN S29"/>
    <property type="match status" value="1"/>
</dbReference>
<dbReference type="PANTHER" id="PTHR12010:SF2">
    <property type="entry name" value="40S RIBOSOMAL PROTEIN S29"/>
    <property type="match status" value="1"/>
</dbReference>
<dbReference type="Pfam" id="PF00253">
    <property type="entry name" value="Ribosomal_S14"/>
    <property type="match status" value="1"/>
</dbReference>
<dbReference type="SUPFAM" id="SSF57716">
    <property type="entry name" value="Glucocorticoid receptor-like (DNA-binding domain)"/>
    <property type="match status" value="1"/>
</dbReference>
<dbReference type="PROSITE" id="PS00527">
    <property type="entry name" value="RIBOSOMAL_S14"/>
    <property type="match status" value="1"/>
</dbReference>
<accession>Q975J4</accession>
<accession>F9VMX4</accession>
<proteinExistence type="inferred from homology"/>